<proteinExistence type="evidence at protein level"/>
<gene>
    <name evidence="5" type="primary">TPS3</name>
</gene>
<dbReference type="EC" id="5.5.1.14" evidence="4"/>
<dbReference type="EMBL" id="MG696750">
    <property type="protein sequence ID" value="AUT77122.1"/>
    <property type="molecule type" value="mRNA"/>
</dbReference>
<dbReference type="SMR" id="A0A2K9RFZ8"/>
<dbReference type="UniPathway" id="UPA00213"/>
<dbReference type="GO" id="GO:0009507">
    <property type="term" value="C:chloroplast"/>
    <property type="evidence" value="ECO:0007669"/>
    <property type="project" value="UniProtKB-SubCell"/>
</dbReference>
<dbReference type="GO" id="GO:0000287">
    <property type="term" value="F:magnesium ion binding"/>
    <property type="evidence" value="ECO:0007669"/>
    <property type="project" value="TreeGrafter"/>
</dbReference>
<dbReference type="GO" id="GO:0051498">
    <property type="term" value="F:syn-copalyl diphosphate synthase activity"/>
    <property type="evidence" value="ECO:0000314"/>
    <property type="project" value="UniProtKB"/>
</dbReference>
<dbReference type="GO" id="GO:0010333">
    <property type="term" value="F:terpene synthase activity"/>
    <property type="evidence" value="ECO:0007669"/>
    <property type="project" value="InterPro"/>
</dbReference>
<dbReference type="GO" id="GO:0009686">
    <property type="term" value="P:gibberellin biosynthetic process"/>
    <property type="evidence" value="ECO:0007669"/>
    <property type="project" value="TreeGrafter"/>
</dbReference>
<dbReference type="FunFam" id="1.50.10.130:FF:000002">
    <property type="entry name" value="Ent-copalyl diphosphate synthase, chloroplastic"/>
    <property type="match status" value="1"/>
</dbReference>
<dbReference type="Gene3D" id="1.50.10.160">
    <property type="match status" value="1"/>
</dbReference>
<dbReference type="Gene3D" id="1.10.600.10">
    <property type="entry name" value="Farnesyl Diphosphate Synthase"/>
    <property type="match status" value="1"/>
</dbReference>
<dbReference type="Gene3D" id="1.50.10.130">
    <property type="entry name" value="Terpene synthase, N-terminal domain"/>
    <property type="match status" value="1"/>
</dbReference>
<dbReference type="InterPro" id="IPR008949">
    <property type="entry name" value="Isoprenoid_synthase_dom_sf"/>
</dbReference>
<dbReference type="InterPro" id="IPR001906">
    <property type="entry name" value="Terpene_synth_N"/>
</dbReference>
<dbReference type="InterPro" id="IPR036965">
    <property type="entry name" value="Terpene_synth_N_sf"/>
</dbReference>
<dbReference type="InterPro" id="IPR050148">
    <property type="entry name" value="Terpene_synthase-like"/>
</dbReference>
<dbReference type="InterPro" id="IPR008930">
    <property type="entry name" value="Terpenoid_cyclase/PrenylTrfase"/>
</dbReference>
<dbReference type="PANTHER" id="PTHR31739:SF30">
    <property type="entry name" value="COPAL-8-OL DIPHOSPHATE HYDRATASE, CHLOROPLASTIC"/>
    <property type="match status" value="1"/>
</dbReference>
<dbReference type="PANTHER" id="PTHR31739">
    <property type="entry name" value="ENT-COPALYL DIPHOSPHATE SYNTHASE, CHLOROPLASTIC"/>
    <property type="match status" value="1"/>
</dbReference>
<dbReference type="Pfam" id="PF01397">
    <property type="entry name" value="Terpene_synth"/>
    <property type="match status" value="1"/>
</dbReference>
<dbReference type="SFLD" id="SFLDG01014">
    <property type="entry name" value="Terpene_Cyclase_Like_1_N-term"/>
    <property type="match status" value="1"/>
</dbReference>
<dbReference type="SFLD" id="SFLDG01605">
    <property type="entry name" value="Terpene_Cyclase_Like_1_N-term"/>
    <property type="match status" value="1"/>
</dbReference>
<dbReference type="SUPFAM" id="SSF48239">
    <property type="entry name" value="Terpenoid cyclases/Protein prenyltransferases"/>
    <property type="match status" value="2"/>
</dbReference>
<dbReference type="SUPFAM" id="SSF48576">
    <property type="entry name" value="Terpenoid synthases"/>
    <property type="match status" value="1"/>
</dbReference>
<keyword id="KW-0150">Chloroplast</keyword>
<keyword id="KW-0413">Isomerase</keyword>
<keyword id="KW-0460">Magnesium</keyword>
<keyword id="KW-0479">Metal-binding</keyword>
<keyword id="KW-0934">Plastid</keyword>
<keyword id="KW-0809">Transit peptide</keyword>
<accession>A0A2K9RFZ8</accession>
<sequence>MCSLSTLSPNFSNAYGSKSVSSTASRFPCWQRSNETWKTQSREVIHWTYVVRCKEVLNEARQGHMNLPHVTLQNDLCEREALKEDMPLLNEYKMEECIRYIKNMLGSMDDGRITVSPYDTAWIALIRDIEGRDIPQFPSSLEWIANNQLSDGSWGDEQFFLAYDRLLNTLACVVALTYWKVHADKSEKGILFIKENISKLGDANVEQMTCGFEVVFPALLTKAKDLGIHGIPYDAPVMQEIFATKDRKMERVPKELLHKVPTCLLHNLEGLGNVDALGKLDWPKLLKLQTPKGSYITSPAASAFAVMETKDKDCLAFINYVVNKFNGGAPTVYPVDIYARLWAVDRLQRLGISRFFEPEIKNCLDYVYRFWTEKGVFSARESEFCDIDDTSMSIRLLRLHGYDIKPNALKHFKKDNMFTCYVGQGFESPSPIFNLYRASQVLFPGETILEEARDFSYNFLRERLEKNDLLDKWLISKHLPDEIKCGLEMPWYASLPRVEARFYIENYGVDDIWIGKSLYRMPEINDPVYLELAKLDYKRCQTQHQLEWRHIQQWYEDSSLEEFGISKKDLLLAYFLAAASIFEPGRSGQRLAWVKSQIMSHILTTYFSIKEASSSEQRKSSTKLENEQGRGQSRKTTIQRFITIFFGSLQEIMRDANEQIGKDISNLLFDIWRVWLEKLGEGNEEIQEVELLVSTINICGGHIASKDILSHSEYKTLSRLTNKICHQLRQLDMGNEELIAIEWRKNKTTDSIYREIEKDMQLLVQLVLQDSSNGISKDIKQTFLLAAKTFYYRAYFPTEQIGNHISKVLFEPVV</sequence>
<comment type="function">
    <text evidence="4 7 8 9">Involved in the biosynthesis of labdane-type diterpenoid including cleroda-dienols, and peregrinol lactones and furan derivatives, dopaminergic diterpenoids that can bind to dopamine receptors in the human pituitary gland, have probably ability to lower prolactin levels, and are used to treat menstrual cycle disorders (e.g. premenstrual syndrome and mastodynia) (Probable). Terpene synthase that produces syn-copalyl diphosophate from geranylgeranyl diphosphate (GGPP) (PubMed:29315936).</text>
</comment>
<comment type="catalytic activity">
    <reaction evidence="4">
        <text>(2E,6E,10E)-geranylgeranyl diphosphate = 9alpha-copalyl diphosphate</text>
        <dbReference type="Rhea" id="RHEA:25524"/>
        <dbReference type="ChEBI" id="CHEBI:58622"/>
        <dbReference type="ChEBI" id="CHEBI:58756"/>
        <dbReference type="EC" id="5.5.1.14"/>
    </reaction>
    <physiologicalReaction direction="left-to-right" evidence="4">
        <dbReference type="Rhea" id="RHEA:25525"/>
    </physiologicalReaction>
</comment>
<comment type="cofactor">
    <cofactor evidence="2">
        <name>Mg(2+)</name>
        <dbReference type="ChEBI" id="CHEBI:18420"/>
    </cofactor>
</comment>
<comment type="pathway">
    <text evidence="8 9">Secondary metabolite biosynthesis; terpenoid biosynthesis.</text>
</comment>
<comment type="subcellular location">
    <subcellularLocation>
        <location evidence="3">Plastid</location>
        <location evidence="3">Chloroplast</location>
    </subcellularLocation>
</comment>
<comment type="tissue specificity">
    <text evidence="4">Mostly expressed in trichomes of leaves and fruits.</text>
</comment>
<comment type="domain">
    <text evidence="6">The Asp-Xaa-Asp-Asp (DXDD) motif is important for the catalytic activity, presumably through binding to Mg(2+).</text>
</comment>
<comment type="similarity">
    <text evidence="6">Belongs to the terpene synthase family.</text>
</comment>
<organism>
    <name type="scientific">Vitex agnus-castus</name>
    <name type="common">Chaste tree</name>
    <dbReference type="NCBI Taxonomy" id="54477"/>
    <lineage>
        <taxon>Eukaryota</taxon>
        <taxon>Viridiplantae</taxon>
        <taxon>Streptophyta</taxon>
        <taxon>Embryophyta</taxon>
        <taxon>Tracheophyta</taxon>
        <taxon>Spermatophyta</taxon>
        <taxon>Magnoliopsida</taxon>
        <taxon>eudicotyledons</taxon>
        <taxon>Gunneridae</taxon>
        <taxon>Pentapetalae</taxon>
        <taxon>asterids</taxon>
        <taxon>lamiids</taxon>
        <taxon>Lamiales</taxon>
        <taxon>Lamiaceae</taxon>
        <taxon>Viticoideae</taxon>
        <taxon>Vitex</taxon>
    </lineage>
</organism>
<reference key="1">
    <citation type="journal article" date="2018" name="Plant J.">
        <title>Biosynthesis of bioactive diterpenoids in the medicinal plant Vitex agnus-castus.</title>
        <authorList>
            <person name="Heskes A.M."/>
            <person name="Sundram T.C.M."/>
            <person name="Boughton B.A."/>
            <person name="Jensen N.B."/>
            <person name="Hansen N.L."/>
            <person name="Crocoll C."/>
            <person name="Cozzi F."/>
            <person name="Rasmussen S."/>
            <person name="Hamberger B."/>
            <person name="Hamberger B."/>
            <person name="Staerk D."/>
            <person name="Moeller B.L."/>
            <person name="Pateraki I."/>
        </authorList>
    </citation>
    <scope>NUCLEOTIDE SEQUENCE [MRNA]</scope>
    <scope>FUNCTION</scope>
    <scope>CATALYTIC ACTIVITY</scope>
    <scope>PATHWAY</scope>
    <scope>TISSUE SPECIFICITY</scope>
    <source>
        <tissue>Fruit</tissue>
        <tissue>Leaf</tissue>
        <tissue>Trichome gland</tissue>
    </source>
</reference>
<reference key="2">
    <citation type="journal article" date="2003" name="Phytomedicine">
        <title>Chaste tree (Vitex agnus-castus)--pharmacology and clinical indications.</title>
        <authorList>
            <person name="Wuttke W."/>
            <person name="Jarry H."/>
            <person name="Christoffel V."/>
            <person name="Spengler B."/>
            <person name="Seidlova-Wuttke D."/>
        </authorList>
    </citation>
    <scope>REVIEW ON MENSTRUAL CYCLE DISORDERS</scope>
</reference>
<reference key="3">
    <citation type="journal article" date="2019" name="Nat. Prod. Rep.">
        <title>Non-volatile natural products in plant glandular trichomes: chemistry, biological activities and biosynthesis.</title>
        <authorList>
            <person name="Liu Y."/>
            <person name="Jing S.-X."/>
            <person name="Luo S.-H."/>
            <person name="Li S.-H."/>
        </authorList>
    </citation>
    <scope>PATHWAY</scope>
    <scope>REVIEW</scope>
</reference>
<evidence type="ECO:0000250" key="1">
    <source>
        <dbReference type="UniProtKB" id="C7BKP9"/>
    </source>
</evidence>
<evidence type="ECO:0000250" key="2">
    <source>
        <dbReference type="UniProtKB" id="Q38802"/>
    </source>
</evidence>
<evidence type="ECO:0000255" key="3"/>
<evidence type="ECO:0000269" key="4">
    <source>
    </source>
</evidence>
<evidence type="ECO:0000303" key="5">
    <source>
    </source>
</evidence>
<evidence type="ECO:0000305" key="6"/>
<evidence type="ECO:0000305" key="7">
    <source>
    </source>
</evidence>
<evidence type="ECO:0000305" key="8">
    <source>
    </source>
</evidence>
<evidence type="ECO:0000305" key="9">
    <source>
    </source>
</evidence>
<protein>
    <recommendedName>
        <fullName evidence="5">Syn-copalyl diphosphate synthase TPS3, chloroplastic</fullName>
        <ecNumber evidence="4">5.5.1.14</ecNumber>
    </recommendedName>
    <alternativeName>
        <fullName evidence="5">Terpene synthase 3</fullName>
        <shortName evidence="5">VacTPS3</shortName>
    </alternativeName>
</protein>
<feature type="transit peptide" description="Chloroplast" evidence="3">
    <location>
        <begin position="1"/>
        <end position="52"/>
    </location>
</feature>
<feature type="chain" id="PRO_0000449309" description="Syn-copalyl diphosphate synthase TPS3, chloroplastic">
    <location>
        <begin position="53"/>
        <end position="814"/>
    </location>
</feature>
<feature type="short sequence motif" description="DXDD motif" evidence="6">
    <location>
        <begin position="386"/>
        <end position="389"/>
    </location>
</feature>
<feature type="binding site" evidence="2">
    <location>
        <position position="248"/>
    </location>
    <ligand>
        <name>substrate</name>
    </ligand>
</feature>
<feature type="binding site" evidence="1">
    <location>
        <position position="386"/>
    </location>
    <ligand>
        <name>Mg(2+)</name>
        <dbReference type="ChEBI" id="CHEBI:18420"/>
    </ligand>
</feature>
<feature type="binding site" evidence="1">
    <location>
        <position position="388"/>
    </location>
    <ligand>
        <name>Mg(2+)</name>
        <dbReference type="ChEBI" id="CHEBI:18420"/>
    </ligand>
</feature>
<feature type="binding site" evidence="2">
    <location>
        <position position="472"/>
    </location>
    <ligand>
        <name>substrate</name>
    </ligand>
</feature>
<name>TPS3_VITAC</name>